<accession>P30721</accession>
<proteinExistence type="evidence at transcript level"/>
<feature type="initiator methionine" description="Removed" evidence="1">
    <location>
        <position position="1"/>
    </location>
</feature>
<feature type="chain" id="PRO_0000078448" description="Chaperone protein DnaK">
    <location>
        <begin position="2"/>
        <end position="615"/>
    </location>
</feature>
<feature type="region of interest" description="Disordered" evidence="2">
    <location>
        <begin position="578"/>
        <end position="615"/>
    </location>
</feature>
<feature type="modified residue" description="Phosphothreonine; by autocatalysis" evidence="1">
    <location>
        <position position="175"/>
    </location>
</feature>
<name>DNAK_CLOAB</name>
<gene>
    <name type="primary">dnaK</name>
    <name type="ordered locus">CA_C1282</name>
</gene>
<evidence type="ECO:0000250" key="1"/>
<evidence type="ECO:0000256" key="2">
    <source>
        <dbReference type="SAM" id="MobiDB-lite"/>
    </source>
</evidence>
<evidence type="ECO:0000305" key="3"/>
<protein>
    <recommendedName>
        <fullName>Chaperone protein DnaK</fullName>
    </recommendedName>
    <alternativeName>
        <fullName>HSP70</fullName>
    </alternativeName>
    <alternativeName>
        <fullName>Heat shock 70 kDa protein</fullName>
    </alternativeName>
    <alternativeName>
        <fullName>Heat shock protein 70</fullName>
    </alternativeName>
</protein>
<keyword id="KW-0067">ATP-binding</keyword>
<keyword id="KW-0143">Chaperone</keyword>
<keyword id="KW-0547">Nucleotide-binding</keyword>
<keyword id="KW-0597">Phosphoprotein</keyword>
<keyword id="KW-1185">Reference proteome</keyword>
<keyword id="KW-0346">Stress response</keyword>
<organism>
    <name type="scientific">Clostridium acetobutylicum (strain ATCC 824 / DSM 792 / JCM 1419 / IAM 19013 / LMG 5710 / NBRC 13948 / NRRL B-527 / VKM B-1787 / 2291 / W)</name>
    <dbReference type="NCBI Taxonomy" id="272562"/>
    <lineage>
        <taxon>Bacteria</taxon>
        <taxon>Bacillati</taxon>
        <taxon>Bacillota</taxon>
        <taxon>Clostridia</taxon>
        <taxon>Eubacteriales</taxon>
        <taxon>Clostridiaceae</taxon>
        <taxon>Clostridium</taxon>
    </lineage>
</organism>
<comment type="function">
    <text evidence="1">Acts as a chaperone.</text>
</comment>
<comment type="induction">
    <text>By heat shock.</text>
</comment>
<comment type="similarity">
    <text evidence="3">Belongs to the heat shock protein 70 family.</text>
</comment>
<dbReference type="EMBL" id="M74569">
    <property type="protein sequence ID" value="AAA23246.1"/>
    <property type="molecule type" value="Genomic_DNA"/>
</dbReference>
<dbReference type="EMBL" id="AE001437">
    <property type="protein sequence ID" value="AAK79253.1"/>
    <property type="molecule type" value="Genomic_DNA"/>
</dbReference>
<dbReference type="PIR" id="B41873">
    <property type="entry name" value="B41873"/>
</dbReference>
<dbReference type="PIR" id="B97058">
    <property type="entry name" value="B97058"/>
</dbReference>
<dbReference type="RefSeq" id="NP_347913.1">
    <property type="nucleotide sequence ID" value="NC_003030.1"/>
</dbReference>
<dbReference type="RefSeq" id="WP_010964594.1">
    <property type="nucleotide sequence ID" value="NC_003030.1"/>
</dbReference>
<dbReference type="SMR" id="P30721"/>
<dbReference type="STRING" id="272562.CA_C1282"/>
<dbReference type="GeneID" id="44997788"/>
<dbReference type="KEGG" id="cac:CA_C1282"/>
<dbReference type="PATRIC" id="fig|272562.8.peg.1483"/>
<dbReference type="eggNOG" id="COG0443">
    <property type="taxonomic scope" value="Bacteria"/>
</dbReference>
<dbReference type="HOGENOM" id="CLU_005965_2_4_9"/>
<dbReference type="OrthoDB" id="9766019at2"/>
<dbReference type="Proteomes" id="UP000000814">
    <property type="component" value="Chromosome"/>
</dbReference>
<dbReference type="GO" id="GO:0005524">
    <property type="term" value="F:ATP binding"/>
    <property type="evidence" value="ECO:0007669"/>
    <property type="project" value="UniProtKB-UniRule"/>
</dbReference>
<dbReference type="GO" id="GO:0140662">
    <property type="term" value="F:ATP-dependent protein folding chaperone"/>
    <property type="evidence" value="ECO:0007669"/>
    <property type="project" value="InterPro"/>
</dbReference>
<dbReference type="GO" id="GO:0051082">
    <property type="term" value="F:unfolded protein binding"/>
    <property type="evidence" value="ECO:0007669"/>
    <property type="project" value="InterPro"/>
</dbReference>
<dbReference type="CDD" id="cd10234">
    <property type="entry name" value="ASKHA_NBD_HSP70_DnaK-like"/>
    <property type="match status" value="1"/>
</dbReference>
<dbReference type="FunFam" id="2.60.34.10:FF:000014">
    <property type="entry name" value="Chaperone protein DnaK HSP70"/>
    <property type="match status" value="1"/>
</dbReference>
<dbReference type="FunFam" id="1.20.1270.10:FF:000001">
    <property type="entry name" value="Molecular chaperone DnaK"/>
    <property type="match status" value="1"/>
</dbReference>
<dbReference type="FunFam" id="3.30.420.40:FF:000071">
    <property type="entry name" value="Molecular chaperone DnaK"/>
    <property type="match status" value="1"/>
</dbReference>
<dbReference type="FunFam" id="3.90.640.10:FF:000003">
    <property type="entry name" value="Molecular chaperone DnaK"/>
    <property type="match status" value="1"/>
</dbReference>
<dbReference type="Gene3D" id="1.20.1270.10">
    <property type="match status" value="1"/>
</dbReference>
<dbReference type="Gene3D" id="3.30.420.40">
    <property type="match status" value="2"/>
</dbReference>
<dbReference type="Gene3D" id="3.90.640.10">
    <property type="entry name" value="Actin, Chain A, domain 4"/>
    <property type="match status" value="1"/>
</dbReference>
<dbReference type="Gene3D" id="2.60.34.10">
    <property type="entry name" value="Substrate Binding Domain Of DNAk, Chain A, domain 1"/>
    <property type="match status" value="1"/>
</dbReference>
<dbReference type="HAMAP" id="MF_00332">
    <property type="entry name" value="DnaK"/>
    <property type="match status" value="1"/>
</dbReference>
<dbReference type="InterPro" id="IPR043129">
    <property type="entry name" value="ATPase_NBD"/>
</dbReference>
<dbReference type="InterPro" id="IPR012725">
    <property type="entry name" value="Chaperone_DnaK"/>
</dbReference>
<dbReference type="InterPro" id="IPR018181">
    <property type="entry name" value="Heat_shock_70_CS"/>
</dbReference>
<dbReference type="InterPro" id="IPR029048">
    <property type="entry name" value="HSP70_C_sf"/>
</dbReference>
<dbReference type="InterPro" id="IPR029047">
    <property type="entry name" value="HSP70_peptide-bd_sf"/>
</dbReference>
<dbReference type="InterPro" id="IPR013126">
    <property type="entry name" value="Hsp_70_fam"/>
</dbReference>
<dbReference type="NCBIfam" id="NF001413">
    <property type="entry name" value="PRK00290.1"/>
    <property type="match status" value="1"/>
</dbReference>
<dbReference type="NCBIfam" id="TIGR02350">
    <property type="entry name" value="prok_dnaK"/>
    <property type="match status" value="1"/>
</dbReference>
<dbReference type="PANTHER" id="PTHR19375">
    <property type="entry name" value="HEAT SHOCK PROTEIN 70KDA"/>
    <property type="match status" value="1"/>
</dbReference>
<dbReference type="Pfam" id="PF00012">
    <property type="entry name" value="HSP70"/>
    <property type="match status" value="2"/>
</dbReference>
<dbReference type="PRINTS" id="PR00301">
    <property type="entry name" value="HEATSHOCK70"/>
</dbReference>
<dbReference type="SUPFAM" id="SSF53067">
    <property type="entry name" value="Actin-like ATPase domain"/>
    <property type="match status" value="2"/>
</dbReference>
<dbReference type="SUPFAM" id="SSF100934">
    <property type="entry name" value="Heat shock protein 70kD (HSP70), C-terminal subdomain"/>
    <property type="match status" value="1"/>
</dbReference>
<dbReference type="SUPFAM" id="SSF100920">
    <property type="entry name" value="Heat shock protein 70kD (HSP70), peptide-binding domain"/>
    <property type="match status" value="1"/>
</dbReference>
<dbReference type="PROSITE" id="PS00297">
    <property type="entry name" value="HSP70_1"/>
    <property type="match status" value="1"/>
</dbReference>
<dbReference type="PROSITE" id="PS00329">
    <property type="entry name" value="HSP70_2"/>
    <property type="match status" value="1"/>
</dbReference>
<dbReference type="PROSITE" id="PS01036">
    <property type="entry name" value="HSP70_3"/>
    <property type="match status" value="1"/>
</dbReference>
<sequence length="615" mass="65649">MSKVIGIDLGTTNSCVAVMEGGDPAVIANSEGARTTPSVVSFQKNGERLVGQVAKRQSITNPDKTIISIKRKMGTAEKVAIDDKNYTPQEISAMILQKLKADAEAYLGETVTQAVITVPAYFNDSQRQATKDAGKIAGLEVLRIINEPTAASLAYGLDKMDTNQKILVYDLGGGTFDVSVLELGDGVFEVKSTNGNTHLGGDDFDEKIMDYIAEEFKKDNGIDLRNDKMALQRLKEAAEKAKIELSSSTQTNINLPFITADATGPKHIDMNLTRAKFNELTEGLVQDTIEPMKKALSDAGLSINDIDKIVLVGGSTRIPAVQEAVKNYTGKDPSKGVNPDECVAIGAAIQAGVLTGDVKDVLLLDVSPLTLGIETLGGVATPLIERNTTIPTRKSQVFSTAADNQPSVEINIVQGERKMAADNKSLGRFTLDGIAPAPRGVPQIEVTFDIDANGIVNVSAKDKGTGKESHITITASTNLSDEEIDKAVKDAEKFAEEDKKKKENIEVKNNADQIVFQTDKALKDLGDKVSAEDKSNIEAKKEALSKVKDGDDIEAIKKATEDLTQALYAITTKMYEQSGAQGAPGADPNAGASQKTNGGADDNVVDADFKVDNDK</sequence>
<reference key="1">
    <citation type="journal article" date="1992" name="J. Bacteriol.">
        <title>Molecular characterization of the dnaK gene region of Clostridium acetobutylicum, including grpE, dnaJ, and a new heat shock gene.</title>
        <authorList>
            <person name="Narberhaus F."/>
            <person name="Giebeler K."/>
            <person name="Bahl H."/>
        </authorList>
    </citation>
    <scope>NUCLEOTIDE SEQUENCE [GENOMIC DNA]</scope>
    <source>
        <strain>ATCC 4259 / DSM 1731 / NCIB 619</strain>
    </source>
</reference>
<reference key="2">
    <citation type="journal article" date="2001" name="J. Bacteriol.">
        <title>Genome sequence and comparative analysis of the solvent-producing bacterium Clostridium acetobutylicum.</title>
        <authorList>
            <person name="Noelling J."/>
            <person name="Breton G."/>
            <person name="Omelchenko M.V."/>
            <person name="Makarova K.S."/>
            <person name="Zeng Q."/>
            <person name="Gibson R."/>
            <person name="Lee H.M."/>
            <person name="Dubois J."/>
            <person name="Qiu D."/>
            <person name="Hitti J."/>
            <person name="Wolf Y.I."/>
            <person name="Tatusov R.L."/>
            <person name="Sabathe F."/>
            <person name="Doucette-Stamm L.A."/>
            <person name="Soucaille P."/>
            <person name="Daly M.J."/>
            <person name="Bennett G.N."/>
            <person name="Koonin E.V."/>
            <person name="Smith D.R."/>
        </authorList>
    </citation>
    <scope>NUCLEOTIDE SEQUENCE [LARGE SCALE GENOMIC DNA]</scope>
    <source>
        <strain>ATCC 824 / DSM 792 / JCM 1419 / IAM 19013 / LMG 5710 / NBRC 13948 / NRRL B-527 / VKM B-1787 / 2291 / W</strain>
    </source>
</reference>